<sequence>MANEEVILLDFWPSMFGMRLRIALAEKEIKYEYKEEDLRNKSPLLLQMNPIHKKIPVLIHNGKPICESIIAVEYIEEVWKDKAPNLLPSDPYDRAQARFWADYIDKKLYDFGRKLWTTKGEEQEAAKKDFIECLKVLEGALGDKPYFGGESFGFVDIALIGYYSWFYAYETFGNFSTEAECPKFVAWAKRCMQRESVAKSLPDQPKVLEFVKVLRQKFGLE</sequence>
<dbReference type="EC" id="2.5.1.18"/>
<dbReference type="EMBL" id="X56266">
    <property type="protein sequence ID" value="CAA39707.1"/>
    <property type="molecule type" value="mRNA"/>
</dbReference>
<dbReference type="PIR" id="S16636">
    <property type="entry name" value="S16636"/>
</dbReference>
<dbReference type="RefSeq" id="NP_001312277.1">
    <property type="nucleotide sequence ID" value="NM_001325348.1"/>
</dbReference>
<dbReference type="SMR" id="Q03666"/>
<dbReference type="PaxDb" id="4097-Q03666"/>
<dbReference type="GeneID" id="107782951"/>
<dbReference type="KEGG" id="nta:107782951"/>
<dbReference type="OMA" id="FWADYAE"/>
<dbReference type="OrthoDB" id="1215279at2759"/>
<dbReference type="Proteomes" id="UP000084051">
    <property type="component" value="Unplaced"/>
</dbReference>
<dbReference type="GO" id="GO:0005737">
    <property type="term" value="C:cytoplasm"/>
    <property type="evidence" value="ECO:0000318"/>
    <property type="project" value="GO_Central"/>
</dbReference>
<dbReference type="GO" id="GO:0004364">
    <property type="term" value="F:glutathione transferase activity"/>
    <property type="evidence" value="ECO:0000318"/>
    <property type="project" value="GO_Central"/>
</dbReference>
<dbReference type="GO" id="GO:0009734">
    <property type="term" value="P:auxin-activated signaling pathway"/>
    <property type="evidence" value="ECO:0007669"/>
    <property type="project" value="UniProtKB-KW"/>
</dbReference>
<dbReference type="GO" id="GO:0006749">
    <property type="term" value="P:glutathione metabolic process"/>
    <property type="evidence" value="ECO:0000318"/>
    <property type="project" value="GO_Central"/>
</dbReference>
<dbReference type="CDD" id="cd03185">
    <property type="entry name" value="GST_C_Tau"/>
    <property type="match status" value="1"/>
</dbReference>
<dbReference type="CDD" id="cd03058">
    <property type="entry name" value="GST_N_Tau"/>
    <property type="match status" value="1"/>
</dbReference>
<dbReference type="FunFam" id="1.20.1050.10:FF:000018">
    <property type="entry name" value="Glutathione S-transferase U20"/>
    <property type="match status" value="1"/>
</dbReference>
<dbReference type="FunFam" id="3.40.30.10:FF:000014">
    <property type="entry name" value="Tau class glutathione S-transferase"/>
    <property type="match status" value="1"/>
</dbReference>
<dbReference type="Gene3D" id="1.20.1050.10">
    <property type="match status" value="1"/>
</dbReference>
<dbReference type="Gene3D" id="3.40.30.10">
    <property type="entry name" value="Glutaredoxin"/>
    <property type="match status" value="1"/>
</dbReference>
<dbReference type="InterPro" id="IPR010987">
    <property type="entry name" value="Glutathione-S-Trfase_C-like"/>
</dbReference>
<dbReference type="InterPro" id="IPR036282">
    <property type="entry name" value="Glutathione-S-Trfase_C_sf"/>
</dbReference>
<dbReference type="InterPro" id="IPR004045">
    <property type="entry name" value="Glutathione_S-Trfase_N"/>
</dbReference>
<dbReference type="InterPro" id="IPR004046">
    <property type="entry name" value="GST_C"/>
</dbReference>
<dbReference type="InterPro" id="IPR045074">
    <property type="entry name" value="GST_C_Tau"/>
</dbReference>
<dbReference type="InterPro" id="IPR045073">
    <property type="entry name" value="Omega/Tau-like"/>
</dbReference>
<dbReference type="InterPro" id="IPR036249">
    <property type="entry name" value="Thioredoxin-like_sf"/>
</dbReference>
<dbReference type="PANTHER" id="PTHR11260:SF726">
    <property type="entry name" value="GLUTATHIONE S-TRANSFERASE PARC-RELATED"/>
    <property type="match status" value="1"/>
</dbReference>
<dbReference type="PANTHER" id="PTHR11260">
    <property type="entry name" value="GLUTATHIONE S-TRANSFERASE, GST, SUPERFAMILY, GST DOMAIN CONTAINING"/>
    <property type="match status" value="1"/>
</dbReference>
<dbReference type="Pfam" id="PF00043">
    <property type="entry name" value="GST_C"/>
    <property type="match status" value="1"/>
</dbReference>
<dbReference type="Pfam" id="PF02798">
    <property type="entry name" value="GST_N"/>
    <property type="match status" value="1"/>
</dbReference>
<dbReference type="SFLD" id="SFLDG01152">
    <property type="entry name" value="Main.3:_Omega-_and_Tau-like"/>
    <property type="match status" value="1"/>
</dbReference>
<dbReference type="SFLD" id="SFLDG00358">
    <property type="entry name" value="Main_(cytGST)"/>
    <property type="match status" value="1"/>
</dbReference>
<dbReference type="SUPFAM" id="SSF47616">
    <property type="entry name" value="GST C-terminal domain-like"/>
    <property type="match status" value="1"/>
</dbReference>
<dbReference type="SUPFAM" id="SSF52833">
    <property type="entry name" value="Thioredoxin-like"/>
    <property type="match status" value="1"/>
</dbReference>
<dbReference type="PROSITE" id="PS50405">
    <property type="entry name" value="GST_CTER"/>
    <property type="match status" value="1"/>
</dbReference>
<dbReference type="PROSITE" id="PS50404">
    <property type="entry name" value="GST_NTER"/>
    <property type="match status" value="1"/>
</dbReference>
<organism>
    <name type="scientific">Nicotiana tabacum</name>
    <name type="common">Common tobacco</name>
    <dbReference type="NCBI Taxonomy" id="4097"/>
    <lineage>
        <taxon>Eukaryota</taxon>
        <taxon>Viridiplantae</taxon>
        <taxon>Streptophyta</taxon>
        <taxon>Embryophyta</taxon>
        <taxon>Tracheophyta</taxon>
        <taxon>Spermatophyta</taxon>
        <taxon>Magnoliopsida</taxon>
        <taxon>eudicotyledons</taxon>
        <taxon>Gunneridae</taxon>
        <taxon>Pentapetalae</taxon>
        <taxon>asterids</taxon>
        <taxon>lamiids</taxon>
        <taxon>Solanales</taxon>
        <taxon>Solanaceae</taxon>
        <taxon>Nicotianoideae</taxon>
        <taxon>Nicotianeae</taxon>
        <taxon>Nicotiana</taxon>
    </lineage>
</organism>
<proteinExistence type="evidence at transcript level"/>
<evidence type="ECO:0000250" key="1"/>
<evidence type="ECO:0000305" key="2"/>
<feature type="chain" id="PRO_0000185865" description="Probable glutathione S-transferase">
    <location>
        <begin position="1"/>
        <end position="221"/>
    </location>
</feature>
<feature type="domain" description="GST N-terminal">
    <location>
        <begin position="4"/>
        <end position="83"/>
    </location>
</feature>
<feature type="domain" description="GST C-terminal">
    <location>
        <begin position="90"/>
        <end position="214"/>
    </location>
</feature>
<feature type="binding site" evidence="1">
    <location>
        <position position="14"/>
    </location>
    <ligand>
        <name>glutathione</name>
        <dbReference type="ChEBI" id="CHEBI:57925"/>
    </ligand>
</feature>
<feature type="binding site" evidence="1">
    <location>
        <position position="41"/>
    </location>
    <ligand>
        <name>glutathione</name>
        <dbReference type="ChEBI" id="CHEBI:57925"/>
    </ligand>
</feature>
<feature type="binding site" evidence="1">
    <location>
        <position position="55"/>
    </location>
    <ligand>
        <name>glutathione</name>
        <dbReference type="ChEBI" id="CHEBI:57925"/>
    </ligand>
</feature>
<feature type="binding site" evidence="1">
    <location>
        <begin position="67"/>
        <end position="68"/>
    </location>
    <ligand>
        <name>glutathione</name>
        <dbReference type="ChEBI" id="CHEBI:57925"/>
    </ligand>
</feature>
<protein>
    <recommendedName>
        <fullName>Probable glutathione S-transferase</fullName>
        <ecNumber>2.5.1.18</ecNumber>
    </recommendedName>
    <alternativeName>
        <fullName>Auxin-induced protein PCNT107</fullName>
    </alternativeName>
</protein>
<comment type="catalytic activity">
    <reaction>
        <text>RX + glutathione = an S-substituted glutathione + a halide anion + H(+)</text>
        <dbReference type="Rhea" id="RHEA:16437"/>
        <dbReference type="ChEBI" id="CHEBI:15378"/>
        <dbReference type="ChEBI" id="CHEBI:16042"/>
        <dbReference type="ChEBI" id="CHEBI:17792"/>
        <dbReference type="ChEBI" id="CHEBI:57925"/>
        <dbReference type="ChEBI" id="CHEBI:90779"/>
        <dbReference type="EC" id="2.5.1.18"/>
    </reaction>
</comment>
<comment type="tissue specificity">
    <text>Root tip-specific expression.</text>
</comment>
<comment type="induction">
    <text>By auxin.</text>
</comment>
<comment type="similarity">
    <text evidence="2">Belongs to the GST superfamily. HSP26 family.</text>
</comment>
<reference key="1">
    <citation type="journal article" date="1991" name="Plant Mol. Biol.">
        <title>Promoters of auxin-induced genes from tobacco can lead to auxin-inducible and root tip-specific expression.</title>
        <authorList>
            <person name="van der Zaal E.J."/>
            <person name="Droog F.N.J."/>
            <person name="Boot C.J.M."/>
            <person name="Hensgens L.A.M."/>
            <person name="Hoge J.H.C."/>
            <person name="Schilperoort R.A."/>
            <person name="Libbenga K.R."/>
        </authorList>
    </citation>
    <scope>NUCLEOTIDE SEQUENCE [MRNA]</scope>
    <source>
        <strain>cv. White Burley</strain>
    </source>
</reference>
<accession>Q03666</accession>
<keyword id="KW-0927">Auxin signaling pathway</keyword>
<keyword id="KW-1185">Reference proteome</keyword>
<keyword id="KW-0808">Transferase</keyword>
<name>GSTX4_TOBAC</name>